<proteinExistence type="inferred from homology"/>
<feature type="chain" id="PRO_0000372966" description="Neuraminidase">
    <location>
        <begin position="1"/>
        <end position="469"/>
    </location>
</feature>
<feature type="topological domain" description="Intravirion" evidence="1">
    <location>
        <begin position="1"/>
        <end position="6"/>
    </location>
</feature>
<feature type="transmembrane region" description="Helical" evidence="1">
    <location>
        <begin position="7"/>
        <end position="27"/>
    </location>
</feature>
<feature type="topological domain" description="Virion surface" evidence="1">
    <location>
        <begin position="28"/>
        <end position="469"/>
    </location>
</feature>
<feature type="region of interest" description="Involved in apical transport and lipid raft association" evidence="1">
    <location>
        <begin position="11"/>
        <end position="33"/>
    </location>
</feature>
<feature type="region of interest" description="Hypervariable stalk region" evidence="1">
    <location>
        <begin position="36"/>
        <end position="90"/>
    </location>
</feature>
<feature type="region of interest" description="Head of neuraminidase" evidence="1">
    <location>
        <begin position="91"/>
        <end position="469"/>
    </location>
</feature>
<feature type="active site" description="Proton donor/acceptor" evidence="1">
    <location>
        <position position="151"/>
    </location>
</feature>
<feature type="active site" description="Nucleophile" evidence="1">
    <location>
        <position position="402"/>
    </location>
</feature>
<feature type="binding site" evidence="1">
    <location>
        <position position="118"/>
    </location>
    <ligand>
        <name>substrate</name>
    </ligand>
</feature>
<feature type="binding site" evidence="1">
    <location>
        <position position="152"/>
    </location>
    <ligand>
        <name>substrate</name>
    </ligand>
</feature>
<feature type="binding site" evidence="1">
    <location>
        <begin position="277"/>
        <end position="278"/>
    </location>
    <ligand>
        <name>substrate</name>
    </ligand>
</feature>
<feature type="binding site" evidence="1">
    <location>
        <position position="293"/>
    </location>
    <ligand>
        <name>substrate</name>
    </ligand>
</feature>
<feature type="binding site" evidence="1">
    <location>
        <position position="294"/>
    </location>
    <ligand>
        <name>Ca(2+)</name>
        <dbReference type="ChEBI" id="CHEBI:29108"/>
    </ligand>
</feature>
<feature type="binding site" evidence="1">
    <location>
        <position position="298"/>
    </location>
    <ligand>
        <name>Ca(2+)</name>
        <dbReference type="ChEBI" id="CHEBI:29108"/>
    </ligand>
</feature>
<feature type="binding site" evidence="1">
    <location>
        <position position="324"/>
    </location>
    <ligand>
        <name>Ca(2+)</name>
        <dbReference type="ChEBI" id="CHEBI:29108"/>
    </ligand>
</feature>
<feature type="binding site" evidence="1">
    <location>
        <position position="344"/>
    </location>
    <ligand>
        <name>Ca(2+)</name>
        <dbReference type="ChEBI" id="CHEBI:29108"/>
    </ligand>
</feature>
<feature type="binding site" evidence="1">
    <location>
        <position position="368"/>
    </location>
    <ligand>
        <name>substrate</name>
    </ligand>
</feature>
<feature type="glycosylation site" description="N-linked (GlcNAc...) asparagine; by host" evidence="1">
    <location>
        <position position="44"/>
    </location>
</feature>
<feature type="glycosylation site" description="N-linked (GlcNAc...) asparagine; by host" evidence="1">
    <location>
        <position position="50"/>
    </location>
</feature>
<feature type="glycosylation site" description="N-linked (GlcNAc...) asparagine; by host" evidence="1">
    <location>
        <position position="58"/>
    </location>
</feature>
<feature type="glycosylation site" description="N-linked (GlcNAc...) asparagine; by host" evidence="1">
    <location>
        <position position="63"/>
    </location>
</feature>
<feature type="glycosylation site" description="N-linked (GlcNAc...) asparagine; by host" evidence="1">
    <location>
        <position position="68"/>
    </location>
</feature>
<feature type="glycosylation site" description="N-linked (GlcNAc...) asparagine; by host" evidence="1">
    <location>
        <position position="88"/>
    </location>
</feature>
<feature type="glycosylation site" description="N-linked (GlcNAc...) asparagine; by host" evidence="1">
    <location>
        <position position="146"/>
    </location>
</feature>
<feature type="glycosylation site" description="N-linked (GlcNAc...) asparagine; by host" evidence="1">
    <location>
        <position position="235"/>
    </location>
</feature>
<feature type="glycosylation site" description="N-linked (GlcNAc...) asparagine; by host" evidence="1">
    <location>
        <position position="365"/>
    </location>
</feature>
<feature type="disulfide bond" evidence="1">
    <location>
        <begin position="92"/>
        <end position="417"/>
    </location>
</feature>
<feature type="disulfide bond" evidence="1">
    <location>
        <begin position="124"/>
        <end position="129"/>
    </location>
</feature>
<feature type="disulfide bond" evidence="1">
    <location>
        <begin position="184"/>
        <end position="231"/>
    </location>
</feature>
<feature type="disulfide bond" evidence="1">
    <location>
        <begin position="233"/>
        <end position="238"/>
    </location>
</feature>
<feature type="disulfide bond" evidence="1">
    <location>
        <begin position="279"/>
        <end position="292"/>
    </location>
</feature>
<feature type="disulfide bond" evidence="1">
    <location>
        <begin position="281"/>
        <end position="290"/>
    </location>
</feature>
<feature type="disulfide bond" evidence="1">
    <location>
        <begin position="318"/>
        <end position="335"/>
    </location>
</feature>
<feature type="disulfide bond" evidence="1">
    <location>
        <begin position="421"/>
        <end position="446"/>
    </location>
</feature>
<gene>
    <name evidence="1" type="primary">NA</name>
</gene>
<organismHost>
    <name type="scientific">Aves</name>
    <dbReference type="NCBI Taxonomy" id="8782"/>
</organismHost>
<organismHost>
    <name type="scientific">Homo sapiens</name>
    <name type="common">Human</name>
    <dbReference type="NCBI Taxonomy" id="9606"/>
</organismHost>
<organismHost>
    <name type="scientific">Sus scrofa</name>
    <name type="common">Pig</name>
    <dbReference type="NCBI Taxonomy" id="9823"/>
</organismHost>
<dbReference type="EC" id="3.2.1.18" evidence="1"/>
<dbReference type="EMBL" id="CY013273">
    <property type="protein sequence ID" value="ABI20829.1"/>
    <property type="molecule type" value="Other_RNA"/>
</dbReference>
<dbReference type="SMR" id="Q0HD57"/>
<dbReference type="CAZy" id="GH34">
    <property type="family name" value="Glycoside Hydrolase Family 34"/>
</dbReference>
<dbReference type="GlyCosmos" id="Q0HD57">
    <property type="glycosylation" value="9 sites, No reported glycans"/>
</dbReference>
<dbReference type="PRO" id="PR:Q0HD57"/>
<dbReference type="Proteomes" id="UP000156248">
    <property type="component" value="Genome"/>
</dbReference>
<dbReference type="GO" id="GO:0020002">
    <property type="term" value="C:host cell plasma membrane"/>
    <property type="evidence" value="ECO:0007669"/>
    <property type="project" value="UniProtKB-SubCell"/>
</dbReference>
<dbReference type="GO" id="GO:0016020">
    <property type="term" value="C:membrane"/>
    <property type="evidence" value="ECO:0007669"/>
    <property type="project" value="UniProtKB-UniRule"/>
</dbReference>
<dbReference type="GO" id="GO:0055036">
    <property type="term" value="C:virion membrane"/>
    <property type="evidence" value="ECO:0007669"/>
    <property type="project" value="UniProtKB-SubCell"/>
</dbReference>
<dbReference type="GO" id="GO:0004308">
    <property type="term" value="F:exo-alpha-sialidase activity"/>
    <property type="evidence" value="ECO:0007669"/>
    <property type="project" value="UniProtKB-UniRule"/>
</dbReference>
<dbReference type="GO" id="GO:0046872">
    <property type="term" value="F:metal ion binding"/>
    <property type="evidence" value="ECO:0007669"/>
    <property type="project" value="UniProtKB-UniRule"/>
</dbReference>
<dbReference type="GO" id="GO:0005975">
    <property type="term" value="P:carbohydrate metabolic process"/>
    <property type="evidence" value="ECO:0007669"/>
    <property type="project" value="InterPro"/>
</dbReference>
<dbReference type="GO" id="GO:0046761">
    <property type="term" value="P:viral budding from plasma membrane"/>
    <property type="evidence" value="ECO:0007669"/>
    <property type="project" value="UniProtKB-UniRule"/>
</dbReference>
<dbReference type="CDD" id="cd15483">
    <property type="entry name" value="Influenza_NA"/>
    <property type="match status" value="1"/>
</dbReference>
<dbReference type="FunFam" id="2.120.10.10:FF:000001">
    <property type="entry name" value="Neuraminidase"/>
    <property type="match status" value="1"/>
</dbReference>
<dbReference type="Gene3D" id="2.120.10.10">
    <property type="match status" value="1"/>
</dbReference>
<dbReference type="HAMAP" id="MF_04071">
    <property type="entry name" value="INFV_NRAM"/>
    <property type="match status" value="1"/>
</dbReference>
<dbReference type="InterPro" id="IPR001860">
    <property type="entry name" value="Glyco_hydro_34"/>
</dbReference>
<dbReference type="InterPro" id="IPR033654">
    <property type="entry name" value="Sialidase_Influenza_A/B"/>
</dbReference>
<dbReference type="InterPro" id="IPR036278">
    <property type="entry name" value="Sialidase_sf"/>
</dbReference>
<dbReference type="Pfam" id="PF00064">
    <property type="entry name" value="Neur"/>
    <property type="match status" value="1"/>
</dbReference>
<dbReference type="SUPFAM" id="SSF50939">
    <property type="entry name" value="Sialidases"/>
    <property type="match status" value="1"/>
</dbReference>
<reference key="1">
    <citation type="submission" date="2006-08" db="EMBL/GenBank/DDBJ databases">
        <title>The NIAID influenza genome sequencing project.</title>
        <authorList>
            <person name="Spiro D."/>
            <person name="Ghedin E."/>
            <person name="Sengamalay N."/>
            <person name="Halpin R."/>
            <person name="Boyne A."/>
            <person name="Zaborsky J."/>
            <person name="Feldblyum T."/>
            <person name="Subbu V."/>
            <person name="Sparenborg J."/>
            <person name="Shumway M."/>
            <person name="Sitz J."/>
            <person name="Katzel D."/>
            <person name="Koo H."/>
            <person name="Salzberg S.L."/>
            <person name="Griesemer S."/>
            <person name="St George K."/>
            <person name="Bennett R."/>
            <person name="Taylor J."/>
            <person name="Bennink J.R."/>
            <person name="Yewdell J.W."/>
            <person name="Bao Y."/>
            <person name="Bolotov P."/>
            <person name="Dernovoy D."/>
            <person name="Kiryutin B."/>
            <person name="Lipman D.J."/>
            <person name="Tatusova T."/>
        </authorList>
    </citation>
    <scope>NUCLEOTIDE SEQUENCE [GENOMIC RNA]</scope>
</reference>
<reference key="2">
    <citation type="submission" date="2006-09" db="EMBL/GenBank/DDBJ databases">
        <authorList>
            <consortium name="The NIAID Influenza Genome Sequencing Consortium"/>
        </authorList>
    </citation>
    <scope>NUCLEOTIDE SEQUENCE [GENOMIC RNA]</scope>
</reference>
<name>NRAM_I40A0</name>
<protein>
    <recommendedName>
        <fullName evidence="1">Neuraminidase</fullName>
        <ecNumber evidence="1">3.2.1.18</ecNumber>
    </recommendedName>
</protein>
<evidence type="ECO:0000255" key="1">
    <source>
        <dbReference type="HAMAP-Rule" id="MF_04071"/>
    </source>
</evidence>
<sequence>MNPNQKIITIGSICMVVGIISLILQIGNIVSIWISHSIQTGNQNHTGTCNQSIITYKNSTWVNQTYVNISNTNVVAGKDTTSVILAGNSSLCPIRGWAIYSKDNGVRIGSKGDVFVIREPFISCSHLECRTFFLTQGALLNDKHSNGTVKDRSPYRALMSCPVGEAPSPYNSRFESVAWSASACHDGMGWLTIGISGPDDGAVAVLKYNGIITETIKSWRKEILRTQESECVCVNGSCFTIMTDGPSGGPASYKIFKIEKGKVTKSIELDAPNSHYEECSCYPDTSKVMCVCRDNWHGSNRPWVSFDQNLDYQMGYICSGVFGDNPRPKDGKGSCGPVYVDGANGVKGFSYRYGNGVWIGRTKSNSSRQGFEMIWDPNGWTETDSNFFMKQDVVAVTDWSGYSGSFVQHPELTGLDCMRPCFWVELIRGRPKENTIWTSGSSISFCGVNSDTVDWSWPDGAELPFTIDK</sequence>
<organism>
    <name type="scientific">Influenza A virus (strain A/Hickox/1940 H1N1)</name>
    <dbReference type="NCBI Taxonomy" id="383543"/>
    <lineage>
        <taxon>Viruses</taxon>
        <taxon>Riboviria</taxon>
        <taxon>Orthornavirae</taxon>
        <taxon>Negarnaviricota</taxon>
        <taxon>Polyploviricotina</taxon>
        <taxon>Insthoviricetes</taxon>
        <taxon>Articulavirales</taxon>
        <taxon>Orthomyxoviridae</taxon>
        <taxon>Alphainfluenzavirus</taxon>
        <taxon>Alphainfluenzavirus influenzae</taxon>
        <taxon>Influenza A virus</taxon>
    </lineage>
</organism>
<accession>Q0HD57</accession>
<keyword id="KW-0106">Calcium</keyword>
<keyword id="KW-1015">Disulfide bond</keyword>
<keyword id="KW-0325">Glycoprotein</keyword>
<keyword id="KW-0326">Glycosidase</keyword>
<keyword id="KW-1032">Host cell membrane</keyword>
<keyword id="KW-1043">Host membrane</keyword>
<keyword id="KW-0378">Hydrolase</keyword>
<keyword id="KW-0472">Membrane</keyword>
<keyword id="KW-0479">Metal-binding</keyword>
<keyword id="KW-0735">Signal-anchor</keyword>
<keyword id="KW-0812">Transmembrane</keyword>
<keyword id="KW-1133">Transmembrane helix</keyword>
<keyword id="KW-0946">Virion</keyword>
<comment type="function">
    <text evidence="1">Catalyzes the removal of terminal sialic acid residues from viral and cellular glycoconjugates. Cleaves off the terminal sialic acids on the glycosylated HA during virus budding to facilitate virus release. Additionally helps virus spread through the circulation by further removing sialic acids from the cell surface. These cleavages prevent self-aggregation and ensure the efficient spread of the progeny virus from cell to cell. Otherwise, infection would be limited to one round of replication. Described as a receptor-destroying enzyme because it cleaves a terminal sialic acid from the cellular receptors. May facilitate viral invasion of the upper airways by cleaving the sialic acid moieties on the mucin of the airway epithelial cells. Likely to plays a role in the budding process through its association with lipid rafts during intracellular transport. May additionally display a raft-association independent effect on budding. Plays a role in the determination of host range restriction on replication and virulence. Sialidase activity in late endosome/lysosome traffic seems to enhance virus replication.</text>
</comment>
<comment type="catalytic activity">
    <reaction evidence="1">
        <text>Hydrolysis of alpha-(2-&gt;3)-, alpha-(2-&gt;6)-, alpha-(2-&gt;8)- glycosidic linkages of terminal sialic acid residues in oligosaccharides, glycoproteins, glycolipids, colominic acid and synthetic substrates.</text>
        <dbReference type="EC" id="3.2.1.18"/>
    </reaction>
</comment>
<comment type="cofactor">
    <cofactor evidence="1">
        <name>Ca(2+)</name>
        <dbReference type="ChEBI" id="CHEBI:29108"/>
    </cofactor>
</comment>
<comment type="activity regulation">
    <text evidence="1">Inhibited by the neuraminidase inhibitors zanamivir (Relenza) and oseltamivir (Tamiflu). These drugs interfere with the release of progeny virus from infected cells and are effective against all influenza strains. Resistance to neuraminidase inhibitors is quite rare.</text>
</comment>
<comment type="subunit">
    <text evidence="1">Homotetramer.</text>
</comment>
<comment type="subcellular location">
    <subcellularLocation>
        <location evidence="1">Virion membrane</location>
    </subcellularLocation>
    <subcellularLocation>
        <location evidence="1">Host apical cell membrane</location>
        <topology evidence="1">Single-pass type II membrane protein</topology>
    </subcellularLocation>
    <text evidence="1">Preferentially accumulates at the apical plasma membrane in infected polarized epithelial cells, which is the virus assembly site. Uses lipid rafts for cell surface transport and apical sorting. In the virion, forms a mushroom-shaped spike on the surface of the membrane.</text>
</comment>
<comment type="domain">
    <text evidence="1">Intact N-terminus is essential for virion morphogenesis. Possesses two apical sorting signals, one in the ectodomain, which is likely to be a glycan, and the other in the transmembrane domain. The transmembrane domain also plays a role in lipid raft association.</text>
</comment>
<comment type="PTM">
    <text evidence="1">N-glycosylated.</text>
</comment>
<comment type="miscellaneous">
    <text>The influenza A genome consist of 8 RNA segments. Genetic variation of hemagglutinin and/or neuraminidase genes results in the emergence of new influenza strains. The mechanism of variation can be the result of point mutations or the result of genetic reassortment between segments of two different strains.</text>
</comment>
<comment type="similarity">
    <text evidence="1">Belongs to the glycosyl hydrolase 34 family.</text>
</comment>